<accession>Q661H4</accession>
<gene>
    <name evidence="1" type="primary">aspS</name>
    <name type="ordered locus">BG0454</name>
</gene>
<name>SYDND_BORGP</name>
<proteinExistence type="inferred from homology"/>
<dbReference type="EC" id="6.1.1.23" evidence="1"/>
<dbReference type="EMBL" id="CP000013">
    <property type="protein sequence ID" value="AAU07297.1"/>
    <property type="molecule type" value="Genomic_DNA"/>
</dbReference>
<dbReference type="RefSeq" id="WP_011193767.1">
    <property type="nucleotide sequence ID" value="NZ_CP028872.1"/>
</dbReference>
<dbReference type="SMR" id="Q661H4"/>
<dbReference type="GeneID" id="45161238"/>
<dbReference type="KEGG" id="bga:BG0454"/>
<dbReference type="eggNOG" id="COG0173">
    <property type="taxonomic scope" value="Bacteria"/>
</dbReference>
<dbReference type="HOGENOM" id="CLU_014330_3_2_12"/>
<dbReference type="OrthoDB" id="9802326at2"/>
<dbReference type="Proteomes" id="UP000002276">
    <property type="component" value="Chromosome"/>
</dbReference>
<dbReference type="GO" id="GO:0005737">
    <property type="term" value="C:cytoplasm"/>
    <property type="evidence" value="ECO:0007669"/>
    <property type="project" value="UniProtKB-SubCell"/>
</dbReference>
<dbReference type="GO" id="GO:0004815">
    <property type="term" value="F:aspartate-tRNA ligase activity"/>
    <property type="evidence" value="ECO:0007669"/>
    <property type="project" value="UniProtKB-UniRule"/>
</dbReference>
<dbReference type="GO" id="GO:0050560">
    <property type="term" value="F:aspartate-tRNA(Asn) ligase activity"/>
    <property type="evidence" value="ECO:0007669"/>
    <property type="project" value="UniProtKB-EC"/>
</dbReference>
<dbReference type="GO" id="GO:0005524">
    <property type="term" value="F:ATP binding"/>
    <property type="evidence" value="ECO:0007669"/>
    <property type="project" value="UniProtKB-UniRule"/>
</dbReference>
<dbReference type="GO" id="GO:0003676">
    <property type="term" value="F:nucleic acid binding"/>
    <property type="evidence" value="ECO:0007669"/>
    <property type="project" value="InterPro"/>
</dbReference>
<dbReference type="GO" id="GO:0006422">
    <property type="term" value="P:aspartyl-tRNA aminoacylation"/>
    <property type="evidence" value="ECO:0007669"/>
    <property type="project" value="UniProtKB-UniRule"/>
</dbReference>
<dbReference type="CDD" id="cd00777">
    <property type="entry name" value="AspRS_core"/>
    <property type="match status" value="1"/>
</dbReference>
<dbReference type="CDD" id="cd04317">
    <property type="entry name" value="EcAspRS_like_N"/>
    <property type="match status" value="1"/>
</dbReference>
<dbReference type="Gene3D" id="3.30.930.10">
    <property type="entry name" value="Bira Bifunctional Protein, Domain 2"/>
    <property type="match status" value="1"/>
</dbReference>
<dbReference type="Gene3D" id="3.30.1360.30">
    <property type="entry name" value="GAD-like domain"/>
    <property type="match status" value="1"/>
</dbReference>
<dbReference type="Gene3D" id="2.40.50.140">
    <property type="entry name" value="Nucleic acid-binding proteins"/>
    <property type="match status" value="1"/>
</dbReference>
<dbReference type="HAMAP" id="MF_00044">
    <property type="entry name" value="Asp_tRNA_synth_type1"/>
    <property type="match status" value="1"/>
</dbReference>
<dbReference type="InterPro" id="IPR004364">
    <property type="entry name" value="Aa-tRNA-synt_II"/>
</dbReference>
<dbReference type="InterPro" id="IPR006195">
    <property type="entry name" value="aa-tRNA-synth_II"/>
</dbReference>
<dbReference type="InterPro" id="IPR045864">
    <property type="entry name" value="aa-tRNA-synth_II/BPL/LPL"/>
</dbReference>
<dbReference type="InterPro" id="IPR004524">
    <property type="entry name" value="Asp-tRNA-ligase_1"/>
</dbReference>
<dbReference type="InterPro" id="IPR047089">
    <property type="entry name" value="Asp-tRNA-ligase_1_N"/>
</dbReference>
<dbReference type="InterPro" id="IPR002312">
    <property type="entry name" value="Asp/Asn-tRNA-synth_IIb"/>
</dbReference>
<dbReference type="InterPro" id="IPR047090">
    <property type="entry name" value="AspRS_core"/>
</dbReference>
<dbReference type="InterPro" id="IPR004115">
    <property type="entry name" value="GAD-like_sf"/>
</dbReference>
<dbReference type="InterPro" id="IPR029351">
    <property type="entry name" value="GAD_dom"/>
</dbReference>
<dbReference type="InterPro" id="IPR012340">
    <property type="entry name" value="NA-bd_OB-fold"/>
</dbReference>
<dbReference type="InterPro" id="IPR004365">
    <property type="entry name" value="NA-bd_OB_tRNA"/>
</dbReference>
<dbReference type="NCBIfam" id="TIGR00459">
    <property type="entry name" value="aspS_bact"/>
    <property type="match status" value="1"/>
</dbReference>
<dbReference type="NCBIfam" id="NF001750">
    <property type="entry name" value="PRK00476.1"/>
    <property type="match status" value="1"/>
</dbReference>
<dbReference type="PANTHER" id="PTHR22594:SF5">
    <property type="entry name" value="ASPARTATE--TRNA LIGASE, MITOCHONDRIAL"/>
    <property type="match status" value="1"/>
</dbReference>
<dbReference type="PANTHER" id="PTHR22594">
    <property type="entry name" value="ASPARTYL/LYSYL-TRNA SYNTHETASE"/>
    <property type="match status" value="1"/>
</dbReference>
<dbReference type="Pfam" id="PF02938">
    <property type="entry name" value="GAD"/>
    <property type="match status" value="1"/>
</dbReference>
<dbReference type="Pfam" id="PF00152">
    <property type="entry name" value="tRNA-synt_2"/>
    <property type="match status" value="1"/>
</dbReference>
<dbReference type="Pfam" id="PF01336">
    <property type="entry name" value="tRNA_anti-codon"/>
    <property type="match status" value="1"/>
</dbReference>
<dbReference type="PRINTS" id="PR01042">
    <property type="entry name" value="TRNASYNTHASP"/>
</dbReference>
<dbReference type="SUPFAM" id="SSF55681">
    <property type="entry name" value="Class II aaRS and biotin synthetases"/>
    <property type="match status" value="1"/>
</dbReference>
<dbReference type="SUPFAM" id="SSF55261">
    <property type="entry name" value="GAD domain-like"/>
    <property type="match status" value="1"/>
</dbReference>
<dbReference type="SUPFAM" id="SSF50249">
    <property type="entry name" value="Nucleic acid-binding proteins"/>
    <property type="match status" value="1"/>
</dbReference>
<dbReference type="PROSITE" id="PS50862">
    <property type="entry name" value="AA_TRNA_LIGASE_II"/>
    <property type="match status" value="1"/>
</dbReference>
<comment type="function">
    <text evidence="1">Aspartyl-tRNA synthetase with relaxed tRNA specificity since it is able to aspartylate not only its cognate tRNA(Asp) but also tRNA(Asn). Reaction proceeds in two steps: L-aspartate is first activated by ATP to form Asp-AMP and then transferred to the acceptor end of tRNA(Asp/Asn).</text>
</comment>
<comment type="catalytic activity">
    <reaction evidence="1">
        <text>tRNA(Asx) + L-aspartate + ATP = L-aspartyl-tRNA(Asx) + AMP + diphosphate</text>
        <dbReference type="Rhea" id="RHEA:18349"/>
        <dbReference type="Rhea" id="RHEA-COMP:9710"/>
        <dbReference type="Rhea" id="RHEA-COMP:9711"/>
        <dbReference type="ChEBI" id="CHEBI:29991"/>
        <dbReference type="ChEBI" id="CHEBI:30616"/>
        <dbReference type="ChEBI" id="CHEBI:33019"/>
        <dbReference type="ChEBI" id="CHEBI:78442"/>
        <dbReference type="ChEBI" id="CHEBI:78516"/>
        <dbReference type="ChEBI" id="CHEBI:456215"/>
        <dbReference type="EC" id="6.1.1.23"/>
    </reaction>
</comment>
<comment type="subunit">
    <text evidence="1">Homodimer.</text>
</comment>
<comment type="subcellular location">
    <subcellularLocation>
        <location evidence="1">Cytoplasm</location>
    </subcellularLocation>
</comment>
<comment type="similarity">
    <text evidence="1">Belongs to the class-II aminoacyl-tRNA synthetase family. Type 1 subfamily.</text>
</comment>
<protein>
    <recommendedName>
        <fullName evidence="1">Aspartate--tRNA(Asp/Asn) ligase</fullName>
        <ecNumber evidence="1">6.1.1.23</ecNumber>
    </recommendedName>
    <alternativeName>
        <fullName evidence="1">Aspartyl-tRNA synthetase</fullName>
        <shortName evidence="1">AspRS</shortName>
    </alternativeName>
    <alternativeName>
        <fullName evidence="1">Non-discriminating aspartyl-tRNA synthetase</fullName>
        <shortName evidence="1">ND-AspRS</shortName>
    </alternativeName>
</protein>
<organism>
    <name type="scientific">Borrelia garinii subsp. bavariensis (strain ATCC BAA-2496 / DSM 23469 / PBi)</name>
    <name type="common">Borreliella bavariensis</name>
    <dbReference type="NCBI Taxonomy" id="290434"/>
    <lineage>
        <taxon>Bacteria</taxon>
        <taxon>Pseudomonadati</taxon>
        <taxon>Spirochaetota</taxon>
        <taxon>Spirochaetia</taxon>
        <taxon>Spirochaetales</taxon>
        <taxon>Borreliaceae</taxon>
        <taxon>Borreliella</taxon>
    </lineage>
</organism>
<reference key="1">
    <citation type="journal article" date="2004" name="Nucleic Acids Res.">
        <title>Comparative analysis of the Borrelia garinii genome.</title>
        <authorList>
            <person name="Gloeckner G."/>
            <person name="Lehmann R."/>
            <person name="Romualdi A."/>
            <person name="Pradella S."/>
            <person name="Schulte-Spechtel U."/>
            <person name="Schilhabel M."/>
            <person name="Wilske B."/>
            <person name="Suehnel J."/>
            <person name="Platzer M."/>
        </authorList>
    </citation>
    <scope>NUCLEOTIDE SEQUENCE [LARGE SCALE GENOMIC DNA]</scope>
    <source>
        <strain>ATCC BAA-2496 / DSM 23469 / PBi</strain>
    </source>
</reference>
<evidence type="ECO:0000255" key="1">
    <source>
        <dbReference type="HAMAP-Rule" id="MF_00044"/>
    </source>
</evidence>
<sequence>MFKVIKCNELNEKLINKKVEINAWVKKIRHHGKFIFLNIRDRYEKAQVLITEEHLLKIAEKIKLEYCIKIQGLLSKRPPNMINENMKTGSFEILAKNIEIISKCNELPFMIEDDNNASENSKLKYRYLDLRRDSLKNKIILRCQATHLIRNFLVKKKFLELETPTFVKSTPEGARDFVIPSRIHKGSFYALPQSPQLYKQLIMIAGFDKYFQIARCYRDEDSRGDRQPEFTQLDLEMSFVKKENIFKLIENMLFLIFKNCLNIKLPKKFKKITYKTAMNKYGSDKPDTRFELTLQDISRNLKNSEFNVFKETLKNKGSIKILIVKDEADKFSRAKINNLEEIAKLYKTQGLYFAKIENNKFSGGIAKFLKTEEQQLIKTYSLENNDIIFFTANKKWETACKAMGQIRIKIANDLGLIDENKFEFLWVYDFPLFEYDENTKTYTPAHHMFSLPKKRYIASLEKIPNKTIGEIYDLVLNGVELGSGSIRIHNKELQQRIFNIIGFQKEKSEDRFGFFLKALEYGAPNHGGIAIGIDRLIMLMTKSTSIKDVILFPKNSFATSPLDDSPSKISNEQLKELGINIVTDDA</sequence>
<feature type="chain" id="PRO_0000110837" description="Aspartate--tRNA(Asp/Asn) ligase">
    <location>
        <begin position="1"/>
        <end position="586"/>
    </location>
</feature>
<feature type="region of interest" description="Aspartate" evidence="1">
    <location>
        <begin position="196"/>
        <end position="199"/>
    </location>
</feature>
<feature type="binding site" evidence="1">
    <location>
        <position position="172"/>
    </location>
    <ligand>
        <name>L-aspartate</name>
        <dbReference type="ChEBI" id="CHEBI:29991"/>
    </ligand>
</feature>
<feature type="binding site" evidence="1">
    <location>
        <begin position="218"/>
        <end position="220"/>
    </location>
    <ligand>
        <name>ATP</name>
        <dbReference type="ChEBI" id="CHEBI:30616"/>
    </ligand>
</feature>
<feature type="binding site" evidence="1">
    <location>
        <position position="218"/>
    </location>
    <ligand>
        <name>L-aspartate</name>
        <dbReference type="ChEBI" id="CHEBI:29991"/>
    </ligand>
</feature>
<feature type="binding site" evidence="1">
    <location>
        <position position="227"/>
    </location>
    <ligand>
        <name>ATP</name>
        <dbReference type="ChEBI" id="CHEBI:30616"/>
    </ligand>
</feature>
<feature type="binding site" evidence="1">
    <location>
        <position position="446"/>
    </location>
    <ligand>
        <name>L-aspartate</name>
        <dbReference type="ChEBI" id="CHEBI:29991"/>
    </ligand>
</feature>
<feature type="binding site" evidence="1">
    <location>
        <position position="480"/>
    </location>
    <ligand>
        <name>ATP</name>
        <dbReference type="ChEBI" id="CHEBI:30616"/>
    </ligand>
</feature>
<feature type="binding site" evidence="1">
    <location>
        <position position="487"/>
    </location>
    <ligand>
        <name>L-aspartate</name>
        <dbReference type="ChEBI" id="CHEBI:29991"/>
    </ligand>
</feature>
<feature type="binding site" evidence="1">
    <location>
        <begin position="532"/>
        <end position="535"/>
    </location>
    <ligand>
        <name>ATP</name>
        <dbReference type="ChEBI" id="CHEBI:30616"/>
    </ligand>
</feature>
<feature type="site" description="Important for tRNA non-discrimination" evidence="1">
    <location>
        <position position="31"/>
    </location>
</feature>
<keyword id="KW-0030">Aminoacyl-tRNA synthetase</keyword>
<keyword id="KW-0067">ATP-binding</keyword>
<keyword id="KW-0963">Cytoplasm</keyword>
<keyword id="KW-0436">Ligase</keyword>
<keyword id="KW-0547">Nucleotide-binding</keyword>
<keyword id="KW-0648">Protein biosynthesis</keyword>